<gene>
    <name evidence="1" type="primary">arnF</name>
    <name type="ordered locus">SNSL254_A2488</name>
</gene>
<evidence type="ECO:0000255" key="1">
    <source>
        <dbReference type="HAMAP-Rule" id="MF_00538"/>
    </source>
</evidence>
<proteinExistence type="inferred from homology"/>
<protein>
    <recommendedName>
        <fullName evidence="1">Probable 4-amino-4-deoxy-L-arabinose-phosphoundecaprenol flippase subunit ArnF</fullName>
        <shortName evidence="1">L-Ara4N-phosphoundecaprenol flippase subunit ArnF</shortName>
    </recommendedName>
    <alternativeName>
        <fullName evidence="1">Undecaprenyl phosphate-aminoarabinose flippase subunit ArnF</fullName>
    </alternativeName>
</protein>
<organism>
    <name type="scientific">Salmonella newport (strain SL254)</name>
    <dbReference type="NCBI Taxonomy" id="423368"/>
    <lineage>
        <taxon>Bacteria</taxon>
        <taxon>Pseudomonadati</taxon>
        <taxon>Pseudomonadota</taxon>
        <taxon>Gammaproteobacteria</taxon>
        <taxon>Enterobacterales</taxon>
        <taxon>Enterobacteriaceae</taxon>
        <taxon>Salmonella</taxon>
    </lineage>
</organism>
<comment type="function">
    <text evidence="1">Translocates 4-amino-4-deoxy-L-arabinose-phosphoundecaprenol (alpha-L-Ara4N-phosphoundecaprenol) from the cytoplasmic to the periplasmic side of the inner membrane.</text>
</comment>
<comment type="pathway">
    <text evidence="1">Bacterial outer membrane biogenesis; lipopolysaccharide biosynthesis.</text>
</comment>
<comment type="subunit">
    <text evidence="1">Heterodimer of ArnE and ArnF.</text>
</comment>
<comment type="subcellular location">
    <subcellularLocation>
        <location evidence="1">Cell inner membrane</location>
        <topology evidence="1">Multi-pass membrane protein</topology>
    </subcellularLocation>
</comment>
<comment type="similarity">
    <text evidence="1">Belongs to the ArnF family.</text>
</comment>
<sequence length="125" mass="13121">MGVMWGLISVAIASLAQLSLGFAMMRLPSIAHPLAFISGLGAFNAATLALFAGLAGYLVSVFCWQKTLHTLALSKAYALLSLSYVLVWVASMLLPGLQGAFSLKAMLGVLCIMAGVMLIFLPARS</sequence>
<name>ARNF_SALNS</name>
<keyword id="KW-0997">Cell inner membrane</keyword>
<keyword id="KW-1003">Cell membrane</keyword>
<keyword id="KW-0441">Lipid A biosynthesis</keyword>
<keyword id="KW-0444">Lipid biosynthesis</keyword>
<keyword id="KW-0443">Lipid metabolism</keyword>
<keyword id="KW-0448">Lipopolysaccharide biosynthesis</keyword>
<keyword id="KW-0472">Membrane</keyword>
<keyword id="KW-0812">Transmembrane</keyword>
<keyword id="KW-1133">Transmembrane helix</keyword>
<keyword id="KW-0813">Transport</keyword>
<accession>B4SYX5</accession>
<dbReference type="EMBL" id="CP001113">
    <property type="protein sequence ID" value="ACF64336.1"/>
    <property type="molecule type" value="Genomic_DNA"/>
</dbReference>
<dbReference type="RefSeq" id="WP_000538694.1">
    <property type="nucleotide sequence ID" value="NZ_CCMR01000001.1"/>
</dbReference>
<dbReference type="KEGG" id="see:SNSL254_A2488"/>
<dbReference type="HOGENOM" id="CLU_131462_1_0_6"/>
<dbReference type="UniPathway" id="UPA00030"/>
<dbReference type="Proteomes" id="UP000008824">
    <property type="component" value="Chromosome"/>
</dbReference>
<dbReference type="GO" id="GO:0005886">
    <property type="term" value="C:plasma membrane"/>
    <property type="evidence" value="ECO:0007669"/>
    <property type="project" value="UniProtKB-SubCell"/>
</dbReference>
<dbReference type="GO" id="GO:1901505">
    <property type="term" value="F:carbohydrate derivative transmembrane transporter activity"/>
    <property type="evidence" value="ECO:0007669"/>
    <property type="project" value="InterPro"/>
</dbReference>
<dbReference type="GO" id="GO:0009245">
    <property type="term" value="P:lipid A biosynthetic process"/>
    <property type="evidence" value="ECO:0007669"/>
    <property type="project" value="UniProtKB-UniRule"/>
</dbReference>
<dbReference type="GO" id="GO:0009103">
    <property type="term" value="P:lipopolysaccharide biosynthetic process"/>
    <property type="evidence" value="ECO:0007669"/>
    <property type="project" value="UniProtKB-UniRule"/>
</dbReference>
<dbReference type="Gene3D" id="1.10.3730.20">
    <property type="match status" value="1"/>
</dbReference>
<dbReference type="HAMAP" id="MF_00538">
    <property type="entry name" value="Flippase_ArnF"/>
    <property type="match status" value="1"/>
</dbReference>
<dbReference type="InterPro" id="IPR022832">
    <property type="entry name" value="Flippase_ArnF"/>
</dbReference>
<dbReference type="InterPro" id="IPR000390">
    <property type="entry name" value="Small_drug/metabolite_transptr"/>
</dbReference>
<dbReference type="NCBIfam" id="NF002816">
    <property type="entry name" value="PRK02971.1-2"/>
    <property type="match status" value="1"/>
</dbReference>
<dbReference type="PANTHER" id="PTHR30561:SF9">
    <property type="entry name" value="4-AMINO-4-DEOXY-L-ARABINOSE-PHOSPHOUNDECAPRENOL FLIPPASE SUBUNIT ARNF-RELATED"/>
    <property type="match status" value="1"/>
</dbReference>
<dbReference type="PANTHER" id="PTHR30561">
    <property type="entry name" value="SMR FAMILY PROTON-DEPENDENT DRUG EFFLUX TRANSPORTER SUGE"/>
    <property type="match status" value="1"/>
</dbReference>
<feature type="chain" id="PRO_1000128669" description="Probable 4-amino-4-deoxy-L-arabinose-phosphoundecaprenol flippase subunit ArnF">
    <location>
        <begin position="1"/>
        <end position="125"/>
    </location>
</feature>
<feature type="topological domain" description="Cytoplasmic" evidence="1">
    <location>
        <begin position="1"/>
        <end position="2"/>
    </location>
</feature>
<feature type="transmembrane region" description="Helical" evidence="1">
    <location>
        <begin position="3"/>
        <end position="23"/>
    </location>
</feature>
<feature type="topological domain" description="Periplasmic" evidence="1">
    <location>
        <begin position="24"/>
        <end position="33"/>
    </location>
</feature>
<feature type="transmembrane region" description="Helical" evidence="1">
    <location>
        <begin position="34"/>
        <end position="54"/>
    </location>
</feature>
<feature type="topological domain" description="Cytoplasmic" evidence="1">
    <location>
        <begin position="55"/>
        <end position="76"/>
    </location>
</feature>
<feature type="transmembrane region" description="Helical" evidence="1">
    <location>
        <begin position="77"/>
        <end position="97"/>
    </location>
</feature>
<feature type="topological domain" description="Periplasmic" evidence="1">
    <location>
        <begin position="98"/>
        <end position="100"/>
    </location>
</feature>
<feature type="transmembrane region" description="Helical" evidence="1">
    <location>
        <begin position="101"/>
        <end position="121"/>
    </location>
</feature>
<feature type="topological domain" description="Cytoplasmic" evidence="1">
    <location>
        <begin position="122"/>
        <end position="125"/>
    </location>
</feature>
<reference key="1">
    <citation type="journal article" date="2011" name="J. Bacteriol.">
        <title>Comparative genomics of 28 Salmonella enterica isolates: evidence for CRISPR-mediated adaptive sublineage evolution.</title>
        <authorList>
            <person name="Fricke W.F."/>
            <person name="Mammel M.K."/>
            <person name="McDermott P.F."/>
            <person name="Tartera C."/>
            <person name="White D.G."/>
            <person name="Leclerc J.E."/>
            <person name="Ravel J."/>
            <person name="Cebula T.A."/>
        </authorList>
    </citation>
    <scope>NUCLEOTIDE SEQUENCE [LARGE SCALE GENOMIC DNA]</scope>
    <source>
        <strain>SL254</strain>
    </source>
</reference>